<keyword id="KW-1185">Reference proteome</keyword>
<feature type="chain" id="PRO_0000348197" description="Putative uncharacterized protein DDB_G0276139">
    <location>
        <begin position="1"/>
        <end position="131"/>
    </location>
</feature>
<feature type="region of interest" description="Disordered" evidence="1">
    <location>
        <begin position="16"/>
        <end position="71"/>
    </location>
</feature>
<feature type="compositionally biased region" description="Acidic residues" evidence="1">
    <location>
        <begin position="20"/>
        <end position="33"/>
    </location>
</feature>
<evidence type="ECO:0000256" key="1">
    <source>
        <dbReference type="SAM" id="MobiDB-lite"/>
    </source>
</evidence>
<name>Y9532_DICDI</name>
<protein>
    <recommendedName>
        <fullName>Putative uncharacterized protein DDB_G0276139</fullName>
    </recommendedName>
</protein>
<accession>Q75JF2</accession>
<accession>Q552G8</accession>
<organism>
    <name type="scientific">Dictyostelium discoideum</name>
    <name type="common">Social amoeba</name>
    <dbReference type="NCBI Taxonomy" id="44689"/>
    <lineage>
        <taxon>Eukaryota</taxon>
        <taxon>Amoebozoa</taxon>
        <taxon>Evosea</taxon>
        <taxon>Eumycetozoa</taxon>
        <taxon>Dictyostelia</taxon>
        <taxon>Dictyosteliales</taxon>
        <taxon>Dictyosteliaceae</taxon>
        <taxon>Dictyostelium</taxon>
    </lineage>
</organism>
<dbReference type="EMBL" id="AAFI02000014">
    <property type="protein sequence ID" value="EAL69369.1"/>
    <property type="molecule type" value="Genomic_DNA"/>
</dbReference>
<dbReference type="RefSeq" id="XP_643242.1">
    <property type="nucleotide sequence ID" value="XM_638150.1"/>
</dbReference>
<dbReference type="PaxDb" id="44689-DDB0169532"/>
<dbReference type="EnsemblProtists" id="EAL69369">
    <property type="protein sequence ID" value="EAL69369"/>
    <property type="gene ID" value="DDB_G0276139"/>
</dbReference>
<dbReference type="GeneID" id="8620284"/>
<dbReference type="KEGG" id="ddi:DDB_G0276139"/>
<dbReference type="dictyBase" id="DDB_G0276139"/>
<dbReference type="VEuPathDB" id="AmoebaDB:DDB_G0276139"/>
<dbReference type="HOGENOM" id="CLU_1931470_0_0_1"/>
<dbReference type="InParanoid" id="Q75JF2"/>
<dbReference type="PRO" id="PR:Q75JF2"/>
<dbReference type="Proteomes" id="UP000002195">
    <property type="component" value="Chromosome 2"/>
</dbReference>
<gene>
    <name type="ORF">DDB_G0276139</name>
</gene>
<sequence>MGELFLLRNIKVAGSMSEQERDEVLEDDDDDEDNKSSQQERDEFVEDDDNNSIQSSPSCAQPLLTQYHDDGSTPLLIPERLQFPTSQNLTPRLIPERLQYPTSQNLTSIKRKTTRLRFGFGEISRVKKTIN</sequence>
<reference key="1">
    <citation type="journal article" date="2002" name="Nature">
        <title>Sequence and analysis of chromosome 2 of Dictyostelium discoideum.</title>
        <authorList>
            <person name="Gloeckner G."/>
            <person name="Eichinger L."/>
            <person name="Szafranski K."/>
            <person name="Pachebat J.A."/>
            <person name="Bankier A.T."/>
            <person name="Dear P.H."/>
            <person name="Lehmann R."/>
            <person name="Baumgart C."/>
            <person name="Parra G."/>
            <person name="Abril J.F."/>
            <person name="Guigo R."/>
            <person name="Kumpf K."/>
            <person name="Tunggal B."/>
            <person name="Cox E.C."/>
            <person name="Quail M.A."/>
            <person name="Platzer M."/>
            <person name="Rosenthal A."/>
            <person name="Noegel A.A."/>
        </authorList>
    </citation>
    <scope>NUCLEOTIDE SEQUENCE [LARGE SCALE GENOMIC DNA]</scope>
    <source>
        <strain>AX4</strain>
    </source>
</reference>
<reference key="2">
    <citation type="journal article" date="2005" name="Nature">
        <title>The genome of the social amoeba Dictyostelium discoideum.</title>
        <authorList>
            <person name="Eichinger L."/>
            <person name="Pachebat J.A."/>
            <person name="Gloeckner G."/>
            <person name="Rajandream M.A."/>
            <person name="Sucgang R."/>
            <person name="Berriman M."/>
            <person name="Song J."/>
            <person name="Olsen R."/>
            <person name="Szafranski K."/>
            <person name="Xu Q."/>
            <person name="Tunggal B."/>
            <person name="Kummerfeld S."/>
            <person name="Madera M."/>
            <person name="Konfortov B.A."/>
            <person name="Rivero F."/>
            <person name="Bankier A.T."/>
            <person name="Lehmann R."/>
            <person name="Hamlin N."/>
            <person name="Davies R."/>
            <person name="Gaudet P."/>
            <person name="Fey P."/>
            <person name="Pilcher K."/>
            <person name="Chen G."/>
            <person name="Saunders D."/>
            <person name="Sodergren E.J."/>
            <person name="Davis P."/>
            <person name="Kerhornou A."/>
            <person name="Nie X."/>
            <person name="Hall N."/>
            <person name="Anjard C."/>
            <person name="Hemphill L."/>
            <person name="Bason N."/>
            <person name="Farbrother P."/>
            <person name="Desany B."/>
            <person name="Just E."/>
            <person name="Morio T."/>
            <person name="Rost R."/>
            <person name="Churcher C.M."/>
            <person name="Cooper J."/>
            <person name="Haydock S."/>
            <person name="van Driessche N."/>
            <person name="Cronin A."/>
            <person name="Goodhead I."/>
            <person name="Muzny D.M."/>
            <person name="Mourier T."/>
            <person name="Pain A."/>
            <person name="Lu M."/>
            <person name="Harper D."/>
            <person name="Lindsay R."/>
            <person name="Hauser H."/>
            <person name="James K.D."/>
            <person name="Quiles M."/>
            <person name="Madan Babu M."/>
            <person name="Saito T."/>
            <person name="Buchrieser C."/>
            <person name="Wardroper A."/>
            <person name="Felder M."/>
            <person name="Thangavelu M."/>
            <person name="Johnson D."/>
            <person name="Knights A."/>
            <person name="Loulseged H."/>
            <person name="Mungall K.L."/>
            <person name="Oliver K."/>
            <person name="Price C."/>
            <person name="Quail M.A."/>
            <person name="Urushihara H."/>
            <person name="Hernandez J."/>
            <person name="Rabbinowitsch E."/>
            <person name="Steffen D."/>
            <person name="Sanders M."/>
            <person name="Ma J."/>
            <person name="Kohara Y."/>
            <person name="Sharp S."/>
            <person name="Simmonds M.N."/>
            <person name="Spiegler S."/>
            <person name="Tivey A."/>
            <person name="Sugano S."/>
            <person name="White B."/>
            <person name="Walker D."/>
            <person name="Woodward J.R."/>
            <person name="Winckler T."/>
            <person name="Tanaka Y."/>
            <person name="Shaulsky G."/>
            <person name="Schleicher M."/>
            <person name="Weinstock G.M."/>
            <person name="Rosenthal A."/>
            <person name="Cox E.C."/>
            <person name="Chisholm R.L."/>
            <person name="Gibbs R.A."/>
            <person name="Loomis W.F."/>
            <person name="Platzer M."/>
            <person name="Kay R.R."/>
            <person name="Williams J.G."/>
            <person name="Dear P.H."/>
            <person name="Noegel A.A."/>
            <person name="Barrell B.G."/>
            <person name="Kuspa A."/>
        </authorList>
    </citation>
    <scope>NUCLEOTIDE SEQUENCE [LARGE SCALE GENOMIC DNA]</scope>
    <source>
        <strain>AX4</strain>
    </source>
</reference>
<proteinExistence type="predicted"/>